<sequence length="594" mass="66924">MKSYSQFNLNAAAPPAIAYETTVVNPNGSPLDPHQQQQQQSQDMPHFGLPGPQPPSSQQQQQQLQVHHQQQQQQQQQQQQQQHQQQMQMSLLPGPYRPHIEEKKLTRDAMEKYMRERNDMVIVILHAKVAQKSYGNEKRFFCPPPCIYLFGSGWRRRYEEMLQQGEGEQGAQLCAFIGIGSSDQDMQQLDLNGKQYCAAKTLFISDSDKRKHFMLSVKMFYGNGHDIGVFNSKRIKVISKPSKKKQSLKNADLCIASGTNVALFNRLRSQTVSTRYLHVENGHFHASSTQWGAFTIHLLDDNESESEEFQVRDGYIHYGATVKLVCSVTGMALPRLIIRKVDKQMALLEADDPVSQLHKCAFYMKDTDRMYLCLSQEKIIQFQATPCPKEPNKEMINDGACWTIISTDKAEYQFYEGMGPVASPVTPVPIVNSLNLNGGGDVAMLELSGDNFTPHLQVWFGDVEAETMYRCTETLLCVVPEISQFRGEWLWVRQPTQVPISLVRNDGIIYATGLTFTYTPEPGPRPHCNTQAEDVMRARQNNNNNNITSISNNNNSNNAGSPAAGGGLQQQQQQHQALPSISEVQWNSHGSGLS</sequence>
<reference key="1">
    <citation type="journal article" date="1991" name="J. Biol. Chem.">
        <title>The Drosophila RBP-J kappa gene encodes the binding protein for the immunoglobulin J kappa recombination signal sequence.</title>
        <authorList>
            <person name="Furukawa T."/>
            <person name="Kawaichi M."/>
            <person name="Matsunami N."/>
            <person name="Ryo H."/>
            <person name="Nishida Y."/>
            <person name="Honjo T."/>
        </authorList>
    </citation>
    <scope>NUCLEOTIDE SEQUENCE [GENOMIC DNA / MRNA]</scope>
    <scope>FUNCTION</scope>
    <source>
        <tissue>Embryo</tissue>
    </source>
</reference>
<reference key="2">
    <citation type="journal article" date="1992" name="Cell">
        <title>Suppressor of Hairless, the Drosophila homolog of the mouse recombination signal-binding protein gene, controls sensory organ cell fates.</title>
        <authorList>
            <person name="Schweisguth F."/>
            <person name="Posakony J.W."/>
        </authorList>
    </citation>
    <scope>NUCLEOTIDE SEQUENCE [MRNA]</scope>
    <scope>FUNCTION</scope>
    <scope>DEVELOPMENTAL STAGE</scope>
    <scope>DISRUPTION PHENOTYPE</scope>
    <source>
        <tissue>Imaginal disk</tissue>
    </source>
</reference>
<reference key="3">
    <citation type="journal article" date="1999" name="Genetics">
        <title>An exploration of the sequence of a 2.9-Mb region of the genome of Drosophila melanogaster: the Adh region.</title>
        <authorList>
            <person name="Ashburner M."/>
            <person name="Misra S."/>
            <person name="Roote J."/>
            <person name="Lewis S.E."/>
            <person name="Blazej R.G."/>
            <person name="Davis T."/>
            <person name="Doyle C."/>
            <person name="Galle R.F."/>
            <person name="George R.A."/>
            <person name="Harris N.L."/>
            <person name="Hartzell G."/>
            <person name="Harvey D.A."/>
            <person name="Hong L."/>
            <person name="Houston K.A."/>
            <person name="Hoskins R.A."/>
            <person name="Johnson G."/>
            <person name="Martin C."/>
            <person name="Moshrefi A.R."/>
            <person name="Palazzolo M."/>
            <person name="Reese M.G."/>
            <person name="Spradling A.C."/>
            <person name="Tsang G."/>
            <person name="Wan K.H."/>
            <person name="Whitelaw K."/>
            <person name="Celniker S.E."/>
            <person name="Rubin G.M."/>
        </authorList>
    </citation>
    <scope>NUCLEOTIDE SEQUENCE [LARGE SCALE GENOMIC DNA]</scope>
    <source>
        <strain>Berkeley</strain>
    </source>
</reference>
<reference key="4">
    <citation type="journal article" date="2000" name="Science">
        <title>The genome sequence of Drosophila melanogaster.</title>
        <authorList>
            <person name="Adams M.D."/>
            <person name="Celniker S.E."/>
            <person name="Holt R.A."/>
            <person name="Evans C.A."/>
            <person name="Gocayne J.D."/>
            <person name="Amanatides P.G."/>
            <person name="Scherer S.E."/>
            <person name="Li P.W."/>
            <person name="Hoskins R.A."/>
            <person name="Galle R.F."/>
            <person name="George R.A."/>
            <person name="Lewis S.E."/>
            <person name="Richards S."/>
            <person name="Ashburner M."/>
            <person name="Henderson S.N."/>
            <person name="Sutton G.G."/>
            <person name="Wortman J.R."/>
            <person name="Yandell M.D."/>
            <person name="Zhang Q."/>
            <person name="Chen L.X."/>
            <person name="Brandon R.C."/>
            <person name="Rogers Y.-H.C."/>
            <person name="Blazej R.G."/>
            <person name="Champe M."/>
            <person name="Pfeiffer B.D."/>
            <person name="Wan K.H."/>
            <person name="Doyle C."/>
            <person name="Baxter E.G."/>
            <person name="Helt G."/>
            <person name="Nelson C.R."/>
            <person name="Miklos G.L.G."/>
            <person name="Abril J.F."/>
            <person name="Agbayani A."/>
            <person name="An H.-J."/>
            <person name="Andrews-Pfannkoch C."/>
            <person name="Baldwin D."/>
            <person name="Ballew R.M."/>
            <person name="Basu A."/>
            <person name="Baxendale J."/>
            <person name="Bayraktaroglu L."/>
            <person name="Beasley E.M."/>
            <person name="Beeson K.Y."/>
            <person name="Benos P.V."/>
            <person name="Berman B.P."/>
            <person name="Bhandari D."/>
            <person name="Bolshakov S."/>
            <person name="Borkova D."/>
            <person name="Botchan M.R."/>
            <person name="Bouck J."/>
            <person name="Brokstein P."/>
            <person name="Brottier P."/>
            <person name="Burtis K.C."/>
            <person name="Busam D.A."/>
            <person name="Butler H."/>
            <person name="Cadieu E."/>
            <person name="Center A."/>
            <person name="Chandra I."/>
            <person name="Cherry J.M."/>
            <person name="Cawley S."/>
            <person name="Dahlke C."/>
            <person name="Davenport L.B."/>
            <person name="Davies P."/>
            <person name="de Pablos B."/>
            <person name="Delcher A."/>
            <person name="Deng Z."/>
            <person name="Mays A.D."/>
            <person name="Dew I."/>
            <person name="Dietz S.M."/>
            <person name="Dodson K."/>
            <person name="Doup L.E."/>
            <person name="Downes M."/>
            <person name="Dugan-Rocha S."/>
            <person name="Dunkov B.C."/>
            <person name="Dunn P."/>
            <person name="Durbin K.J."/>
            <person name="Evangelista C.C."/>
            <person name="Ferraz C."/>
            <person name="Ferriera S."/>
            <person name="Fleischmann W."/>
            <person name="Fosler C."/>
            <person name="Gabrielian A.E."/>
            <person name="Garg N.S."/>
            <person name="Gelbart W.M."/>
            <person name="Glasser K."/>
            <person name="Glodek A."/>
            <person name="Gong F."/>
            <person name="Gorrell J.H."/>
            <person name="Gu Z."/>
            <person name="Guan P."/>
            <person name="Harris M."/>
            <person name="Harris N.L."/>
            <person name="Harvey D.A."/>
            <person name="Heiman T.J."/>
            <person name="Hernandez J.R."/>
            <person name="Houck J."/>
            <person name="Hostin D."/>
            <person name="Houston K.A."/>
            <person name="Howland T.J."/>
            <person name="Wei M.-H."/>
            <person name="Ibegwam C."/>
            <person name="Jalali M."/>
            <person name="Kalush F."/>
            <person name="Karpen G.H."/>
            <person name="Ke Z."/>
            <person name="Kennison J.A."/>
            <person name="Ketchum K.A."/>
            <person name="Kimmel B.E."/>
            <person name="Kodira C.D."/>
            <person name="Kraft C.L."/>
            <person name="Kravitz S."/>
            <person name="Kulp D."/>
            <person name="Lai Z."/>
            <person name="Lasko P."/>
            <person name="Lei Y."/>
            <person name="Levitsky A.A."/>
            <person name="Li J.H."/>
            <person name="Li Z."/>
            <person name="Liang Y."/>
            <person name="Lin X."/>
            <person name="Liu X."/>
            <person name="Mattei B."/>
            <person name="McIntosh T.C."/>
            <person name="McLeod M.P."/>
            <person name="McPherson D."/>
            <person name="Merkulov G."/>
            <person name="Milshina N.V."/>
            <person name="Mobarry C."/>
            <person name="Morris J."/>
            <person name="Moshrefi A."/>
            <person name="Mount S.M."/>
            <person name="Moy M."/>
            <person name="Murphy B."/>
            <person name="Murphy L."/>
            <person name="Muzny D.M."/>
            <person name="Nelson D.L."/>
            <person name="Nelson D.R."/>
            <person name="Nelson K.A."/>
            <person name="Nixon K."/>
            <person name="Nusskern D.R."/>
            <person name="Pacleb J.M."/>
            <person name="Palazzolo M."/>
            <person name="Pittman G.S."/>
            <person name="Pan S."/>
            <person name="Pollard J."/>
            <person name="Puri V."/>
            <person name="Reese M.G."/>
            <person name="Reinert K."/>
            <person name="Remington K."/>
            <person name="Saunders R.D.C."/>
            <person name="Scheeler F."/>
            <person name="Shen H."/>
            <person name="Shue B.C."/>
            <person name="Siden-Kiamos I."/>
            <person name="Simpson M."/>
            <person name="Skupski M.P."/>
            <person name="Smith T.J."/>
            <person name="Spier E."/>
            <person name="Spradling A.C."/>
            <person name="Stapleton M."/>
            <person name="Strong R."/>
            <person name="Sun E."/>
            <person name="Svirskas R."/>
            <person name="Tector C."/>
            <person name="Turner R."/>
            <person name="Venter E."/>
            <person name="Wang A.H."/>
            <person name="Wang X."/>
            <person name="Wang Z.-Y."/>
            <person name="Wassarman D.A."/>
            <person name="Weinstock G.M."/>
            <person name="Weissenbach J."/>
            <person name="Williams S.M."/>
            <person name="Woodage T."/>
            <person name="Worley K.C."/>
            <person name="Wu D."/>
            <person name="Yang S."/>
            <person name="Yao Q.A."/>
            <person name="Ye J."/>
            <person name="Yeh R.-F."/>
            <person name="Zaveri J.S."/>
            <person name="Zhan M."/>
            <person name="Zhang G."/>
            <person name="Zhao Q."/>
            <person name="Zheng L."/>
            <person name="Zheng X.H."/>
            <person name="Zhong F.N."/>
            <person name="Zhong W."/>
            <person name="Zhou X."/>
            <person name="Zhu S.C."/>
            <person name="Zhu X."/>
            <person name="Smith H.O."/>
            <person name="Gibbs R.A."/>
            <person name="Myers E.W."/>
            <person name="Rubin G.M."/>
            <person name="Venter J.C."/>
        </authorList>
    </citation>
    <scope>NUCLEOTIDE SEQUENCE [LARGE SCALE GENOMIC DNA]</scope>
    <source>
        <strain>Berkeley</strain>
    </source>
</reference>
<reference key="5">
    <citation type="journal article" date="2002" name="Genome Biol.">
        <title>Annotation of the Drosophila melanogaster euchromatic genome: a systematic review.</title>
        <authorList>
            <person name="Misra S."/>
            <person name="Crosby M.A."/>
            <person name="Mungall C.J."/>
            <person name="Matthews B.B."/>
            <person name="Campbell K.S."/>
            <person name="Hradecky P."/>
            <person name="Huang Y."/>
            <person name="Kaminker J.S."/>
            <person name="Millburn G.H."/>
            <person name="Prochnik S.E."/>
            <person name="Smith C.D."/>
            <person name="Tupy J.L."/>
            <person name="Whitfield E.J."/>
            <person name="Bayraktaroglu L."/>
            <person name="Berman B.P."/>
            <person name="Bettencourt B.R."/>
            <person name="Celniker S.E."/>
            <person name="de Grey A.D.N.J."/>
            <person name="Drysdale R.A."/>
            <person name="Harris N.L."/>
            <person name="Richter J."/>
            <person name="Russo S."/>
            <person name="Schroeder A.J."/>
            <person name="Shu S.Q."/>
            <person name="Stapleton M."/>
            <person name="Yamada C."/>
            <person name="Ashburner M."/>
            <person name="Gelbart W.M."/>
            <person name="Rubin G.M."/>
            <person name="Lewis S.E."/>
        </authorList>
    </citation>
    <scope>GENOME REANNOTATION</scope>
    <source>
        <strain>Berkeley</strain>
    </source>
</reference>
<reference key="6">
    <citation type="journal article" date="2002" name="Genome Biol.">
        <title>A Drosophila full-length cDNA resource.</title>
        <authorList>
            <person name="Stapleton M."/>
            <person name="Carlson J.W."/>
            <person name="Brokstein P."/>
            <person name="Yu C."/>
            <person name="Champe M."/>
            <person name="George R.A."/>
            <person name="Guarin H."/>
            <person name="Kronmiller B."/>
            <person name="Pacleb J.M."/>
            <person name="Park S."/>
            <person name="Wan K.H."/>
            <person name="Rubin G.M."/>
            <person name="Celniker S.E."/>
        </authorList>
    </citation>
    <scope>NUCLEOTIDE SEQUENCE [LARGE SCALE MRNA]</scope>
    <source>
        <strain>Berkeley</strain>
        <tissue>Head</tissue>
    </source>
</reference>
<reference key="7">
    <citation type="journal article" date="1999" name="Genetics">
        <title>Selective sweep at the Drosophila melanogaster Suppressor of Hairless locus and its association with the In(2L)t inversion polymorphism.</title>
        <authorList>
            <person name="Depaulis F."/>
            <person name="Brazier L."/>
            <person name="Veuille M."/>
        </authorList>
    </citation>
    <scope>NUCLEOTIDE SEQUENCE [GENOMIC DNA] OF 25-128</scope>
    <source>
        <strain>LAMTO 101</strain>
        <strain>LAMTO 106</strain>
        <strain>LAMTO 111</strain>
        <strain>LAMTO 12</strain>
        <strain>LAMTO 120</strain>
        <strain>LAMTO 124</strain>
        <strain>LAMTO 13</strain>
        <strain>LAMTO 134</strain>
        <strain>LAMTO 19</strain>
        <strain>LAMTO 21</strain>
        <strain>LAMTO 27</strain>
        <strain>LAMTO 28</strain>
        <strain>LAMTO 3</strain>
        <strain>LAMTO 31</strain>
        <strain>LAMTO 33</strain>
        <strain>LAMTO 35</strain>
        <strain>LAMTO 37</strain>
        <strain>LAMTO 4</strain>
        <strain>LAMTO 5</strain>
        <strain>LAMTP 18</strain>
    </source>
</reference>
<reference key="8">
    <citation type="journal article" date="1992" name="Cell">
        <title>The Drosophila homolog of the immunoglobulin recombination signal-binding protein regulates peripheral nervous system development.</title>
        <authorList>
            <person name="Furukawa T."/>
            <person name="Maruyama S."/>
            <person name="Kawaichi M."/>
            <person name="Honjo T."/>
        </authorList>
    </citation>
    <scope>FUNCTION</scope>
    <scope>DEVELOPMENTAL STAGE</scope>
</reference>
<reference key="9">
    <citation type="journal article" date="1994" name="Dev. Biol.">
        <title>The sequence similarity of the Drosophila suppressor of hairless protein to the integrase domain has no functional significance in vivo.</title>
        <authorList>
            <person name="Schweisguth F."/>
            <person name="Nero P."/>
            <person name="Posakony J.W."/>
        </authorList>
    </citation>
    <scope>FUNCTION</scope>
    <scope>MUTAGENESIS OF TYR-315</scope>
</reference>
<reference key="10">
    <citation type="journal article" date="1994" name="Genes Dev.">
        <title>Inhibition of the DNA-binding activity of Drosophila suppressor of hairless and of its human homolog, KBF2/RBP-J kappa, by direct protein-protein interaction with Drosophila hairless.</title>
        <authorList>
            <person name="Brou C."/>
            <person name="Logeat F."/>
            <person name="Lecourtois M."/>
            <person name="Vandekerckhove J."/>
            <person name="Kourilsky P."/>
            <person name="Schweisguth F."/>
            <person name="Israel A."/>
        </authorList>
    </citation>
    <scope>INTERACTION WITH HAIRLESS</scope>
</reference>
<reference key="11">
    <citation type="journal article" date="1996" name="Development">
        <title>Subcellular localization of Suppressor of Hairless in Drosophila sense organ cells during Notch signalling.</title>
        <authorList>
            <person name="Gho M."/>
            <person name="Lecourtois M."/>
            <person name="Geraud G."/>
            <person name="Posakony J.W."/>
            <person name="Schweisguth F."/>
        </authorList>
    </citation>
    <scope>FUNCTION</scope>
    <scope>SUBCELLULAR LOCATION</scope>
</reference>
<reference key="12">
    <citation type="journal article" date="2000" name="Genes Dev.">
        <title>Repression by suppressor of hairless and activation by Notch are required to define a single row of single-minded expressing cells in the Drosophila embryo.</title>
        <authorList>
            <person name="Morel V."/>
            <person name="Schweisguth F."/>
        </authorList>
    </citation>
    <scope>FUNCTION</scope>
    <scope>DNA-BINDING</scope>
</reference>
<reference key="13">
    <citation type="journal article" date="2003" name="Development">
        <title>A Notch-independent function of Suppressor of Hairless during the development of the bristle sensory organ precursor cell of Drosophila.</title>
        <authorList>
            <person name="Koelzer S."/>
            <person name="Klein T."/>
        </authorList>
    </citation>
    <scope>FUNCTION</scope>
</reference>
<reference key="14">
    <citation type="journal article" date="2011" name="Dev. Biol.">
        <title>The bHLH factor deadpan is a direct target of Notch signaling and regulates neuroblast self-renewal in Drosophila.</title>
        <authorList>
            <person name="San-Juan B.P."/>
            <person name="Baonza A."/>
        </authorList>
    </citation>
    <scope>FUNCTION</scope>
    <scope>DISRUPTION PHENOTYPE</scope>
</reference>
<reference key="15">
    <citation type="journal article" date="2011" name="EMBO J.">
        <title>Insensitive is a corepressor for Suppressor of Hairless and regulates Notch signalling during neural development.</title>
        <authorList>
            <person name="Duan H."/>
            <person name="Dai Q."/>
            <person name="Kavaler J."/>
            <person name="Bejarano F."/>
            <person name="Medranda G."/>
            <person name="Negre N."/>
            <person name="Lai E.C."/>
        </authorList>
    </citation>
    <scope>INTERACTION WITH INSV</scope>
</reference>
<evidence type="ECO:0000250" key="1">
    <source>
        <dbReference type="UniProtKB" id="Q06330"/>
    </source>
</evidence>
<evidence type="ECO:0000256" key="2">
    <source>
        <dbReference type="SAM" id="MobiDB-lite"/>
    </source>
</evidence>
<evidence type="ECO:0000269" key="3">
    <source>
    </source>
</evidence>
<evidence type="ECO:0000269" key="4">
    <source>
    </source>
</evidence>
<evidence type="ECO:0000269" key="5">
    <source>
    </source>
</evidence>
<evidence type="ECO:0000269" key="6">
    <source>
    </source>
</evidence>
<evidence type="ECO:0000269" key="7">
    <source>
    </source>
</evidence>
<evidence type="ECO:0000269" key="8">
    <source>
    </source>
</evidence>
<evidence type="ECO:0000269" key="9">
    <source>
    </source>
</evidence>
<evidence type="ECO:0000269" key="10">
    <source>
    </source>
</evidence>
<evidence type="ECO:0000269" key="11">
    <source>
    </source>
</evidence>
<evidence type="ECO:0000269" key="12">
    <source>
    </source>
</evidence>
<evidence type="ECO:0000305" key="13"/>
<evidence type="ECO:0007829" key="14">
    <source>
        <dbReference type="PDB" id="5E24"/>
    </source>
</evidence>
<dbReference type="EMBL" id="S69213">
    <property type="protein sequence ID" value="AAA06211.1"/>
    <property type="status" value="ALT_FRAME"/>
    <property type="molecule type" value="Genomic_DNA"/>
</dbReference>
<dbReference type="EMBL" id="X58393">
    <property type="protein sequence ID" value="CAA41282.1"/>
    <property type="status" value="ALT_INIT"/>
    <property type="molecule type" value="mRNA"/>
</dbReference>
<dbReference type="EMBL" id="M94383">
    <property type="protein sequence ID" value="AAA28919.1"/>
    <property type="molecule type" value="mRNA"/>
</dbReference>
<dbReference type="EMBL" id="AE014134">
    <property type="protein sequence ID" value="AAF53434.1"/>
    <property type="molecule type" value="Genomic_DNA"/>
</dbReference>
<dbReference type="EMBL" id="AY069091">
    <property type="protein sequence ID" value="AAL39236.1"/>
    <property type="molecule type" value="mRNA"/>
</dbReference>
<dbReference type="EMBL" id="AF088255">
    <property type="protein sequence ID" value="AAD39698.1"/>
    <property type="molecule type" value="Genomic_DNA"/>
</dbReference>
<dbReference type="EMBL" id="AF088256">
    <property type="protein sequence ID" value="AAD39699.1"/>
    <property type="molecule type" value="Genomic_DNA"/>
</dbReference>
<dbReference type="EMBL" id="AF088257">
    <property type="protein sequence ID" value="AAD39700.1"/>
    <property type="molecule type" value="Genomic_DNA"/>
</dbReference>
<dbReference type="EMBL" id="AF088258">
    <property type="protein sequence ID" value="AAD39701.1"/>
    <property type="molecule type" value="Genomic_DNA"/>
</dbReference>
<dbReference type="EMBL" id="AF088259">
    <property type="protein sequence ID" value="AAD39702.1"/>
    <property type="molecule type" value="Genomic_DNA"/>
</dbReference>
<dbReference type="EMBL" id="AF088260">
    <property type="protein sequence ID" value="AAD39703.1"/>
    <property type="molecule type" value="Genomic_DNA"/>
</dbReference>
<dbReference type="EMBL" id="AF088261">
    <property type="protein sequence ID" value="AAD39704.1"/>
    <property type="molecule type" value="Genomic_DNA"/>
</dbReference>
<dbReference type="EMBL" id="AF088262">
    <property type="protein sequence ID" value="AAD39705.1"/>
    <property type="molecule type" value="Genomic_DNA"/>
</dbReference>
<dbReference type="EMBL" id="AF088263">
    <property type="protein sequence ID" value="AAD39706.1"/>
    <property type="molecule type" value="Genomic_DNA"/>
</dbReference>
<dbReference type="EMBL" id="AF088264">
    <property type="protein sequence ID" value="AAD39707.1"/>
    <property type="molecule type" value="Genomic_DNA"/>
</dbReference>
<dbReference type="EMBL" id="AF088265">
    <property type="protein sequence ID" value="AAD39708.1"/>
    <property type="molecule type" value="Genomic_DNA"/>
</dbReference>
<dbReference type="EMBL" id="AF088266">
    <property type="protein sequence ID" value="AAD39709.1"/>
    <property type="molecule type" value="Genomic_DNA"/>
</dbReference>
<dbReference type="EMBL" id="AF088267">
    <property type="protein sequence ID" value="AAD39710.1"/>
    <property type="molecule type" value="Genomic_DNA"/>
</dbReference>
<dbReference type="EMBL" id="AF088268">
    <property type="protein sequence ID" value="AAD39711.1"/>
    <property type="molecule type" value="Genomic_DNA"/>
</dbReference>
<dbReference type="EMBL" id="AF088269">
    <property type="protein sequence ID" value="AAD39712.1"/>
    <property type="molecule type" value="Genomic_DNA"/>
</dbReference>
<dbReference type="EMBL" id="AF088270">
    <property type="protein sequence ID" value="AAD39713.1"/>
    <property type="molecule type" value="Genomic_DNA"/>
</dbReference>
<dbReference type="EMBL" id="AF088271">
    <property type="protein sequence ID" value="AAD39714.1"/>
    <property type="molecule type" value="Genomic_DNA"/>
</dbReference>
<dbReference type="EMBL" id="AF088272">
    <property type="protein sequence ID" value="AAD39715.1"/>
    <property type="molecule type" value="Genomic_DNA"/>
</dbReference>
<dbReference type="EMBL" id="AF088273">
    <property type="protein sequence ID" value="AAD39716.1"/>
    <property type="molecule type" value="Genomic_DNA"/>
</dbReference>
<dbReference type="EMBL" id="AF088274">
    <property type="protein sequence ID" value="AAD39717.1"/>
    <property type="molecule type" value="Genomic_DNA"/>
</dbReference>
<dbReference type="PIR" id="A41585">
    <property type="entry name" value="A41585"/>
</dbReference>
<dbReference type="PIR" id="A42770">
    <property type="entry name" value="A42770"/>
</dbReference>
<dbReference type="RefSeq" id="NP_001285948.1">
    <property type="nucleotide sequence ID" value="NM_001299019.1"/>
</dbReference>
<dbReference type="RefSeq" id="NP_476868.1">
    <property type="nucleotide sequence ID" value="NM_057520.4"/>
</dbReference>
<dbReference type="PDB" id="5E24">
    <property type="method" value="X-ray"/>
    <property type="resolution" value="2.14 A"/>
    <property type="chains" value="E/F=99-522"/>
</dbReference>
<dbReference type="PDBsum" id="5E24"/>
<dbReference type="SMR" id="P28159"/>
<dbReference type="BioGRID" id="60899">
    <property type="interactions" value="85"/>
</dbReference>
<dbReference type="ComplexPortal" id="CPX-2337">
    <property type="entry name" value="CSL-Notch-Mastermind transcriptional activation complex"/>
</dbReference>
<dbReference type="DIP" id="DIP-177N"/>
<dbReference type="FunCoup" id="P28159">
    <property type="interactions" value="1747"/>
</dbReference>
<dbReference type="IntAct" id="P28159">
    <property type="interactions" value="26"/>
</dbReference>
<dbReference type="MINT" id="P28159"/>
<dbReference type="STRING" id="7227.FBpp0080261"/>
<dbReference type="GlyGen" id="P28159">
    <property type="glycosylation" value="1 site"/>
</dbReference>
<dbReference type="iPTMnet" id="P28159"/>
<dbReference type="PaxDb" id="7227-FBpp0080261"/>
<dbReference type="EnsemblMetazoa" id="FBtr0080700">
    <property type="protein sequence ID" value="FBpp0080261"/>
    <property type="gene ID" value="FBgn0004837"/>
</dbReference>
<dbReference type="EnsemblMetazoa" id="FBtr0346621">
    <property type="protein sequence ID" value="FBpp0312201"/>
    <property type="gene ID" value="FBgn0004837"/>
</dbReference>
<dbReference type="GeneID" id="34881"/>
<dbReference type="KEGG" id="dme:Dmel_CG3497"/>
<dbReference type="AGR" id="FB:FBgn0004837"/>
<dbReference type="CTD" id="34881"/>
<dbReference type="FlyBase" id="FBgn0004837">
    <property type="gene designation" value="Su(H)"/>
</dbReference>
<dbReference type="VEuPathDB" id="VectorBase:FBgn0004837"/>
<dbReference type="eggNOG" id="KOG3743">
    <property type="taxonomic scope" value="Eukaryota"/>
</dbReference>
<dbReference type="HOGENOM" id="CLU_022207_2_1_1"/>
<dbReference type="InParanoid" id="P28159"/>
<dbReference type="OMA" id="QRQDMPH"/>
<dbReference type="OrthoDB" id="5600360at2759"/>
<dbReference type="PhylomeDB" id="P28159"/>
<dbReference type="Reactome" id="R-DME-350054">
    <property type="pathway name" value="Notch-HLH transcription pathway"/>
</dbReference>
<dbReference type="SignaLink" id="P28159"/>
<dbReference type="BioGRID-ORCS" id="34881">
    <property type="hits" value="0 hits in 3 CRISPR screens"/>
</dbReference>
<dbReference type="GenomeRNAi" id="34881"/>
<dbReference type="PRO" id="PR:P28159"/>
<dbReference type="Proteomes" id="UP000000803">
    <property type="component" value="Chromosome 2L"/>
</dbReference>
<dbReference type="Bgee" id="FBgn0004837">
    <property type="expression patterns" value="Expressed in tormogen cell in proboscis and 208 other cell types or tissues"/>
</dbReference>
<dbReference type="ExpressionAtlas" id="P28159">
    <property type="expression patterns" value="baseline and differential"/>
</dbReference>
<dbReference type="GO" id="GO:1990433">
    <property type="term" value="C:CSL-Notch-Mastermind transcription factor complex"/>
    <property type="evidence" value="ECO:0000314"/>
    <property type="project" value="FlyBase"/>
</dbReference>
<dbReference type="GO" id="GO:0005737">
    <property type="term" value="C:cytoplasm"/>
    <property type="evidence" value="ECO:0000314"/>
    <property type="project" value="FlyBase"/>
</dbReference>
<dbReference type="GO" id="GO:0005654">
    <property type="term" value="C:nucleoplasm"/>
    <property type="evidence" value="ECO:0000304"/>
    <property type="project" value="Reactome"/>
</dbReference>
<dbReference type="GO" id="GO:0005634">
    <property type="term" value="C:nucleus"/>
    <property type="evidence" value="ECO:0000314"/>
    <property type="project" value="FlyBase"/>
</dbReference>
<dbReference type="GO" id="GO:0005700">
    <property type="term" value="C:polytene chromosome"/>
    <property type="evidence" value="ECO:0000314"/>
    <property type="project" value="FlyBase"/>
</dbReference>
<dbReference type="GO" id="GO:0032991">
    <property type="term" value="C:protein-containing complex"/>
    <property type="evidence" value="ECO:0000353"/>
    <property type="project" value="FlyBase"/>
</dbReference>
<dbReference type="GO" id="GO:0090571">
    <property type="term" value="C:RNA polymerase II transcription repressor complex"/>
    <property type="evidence" value="ECO:0000353"/>
    <property type="project" value="FlyBase"/>
</dbReference>
<dbReference type="GO" id="GO:0017053">
    <property type="term" value="C:transcription repressor complex"/>
    <property type="evidence" value="ECO:0000316"/>
    <property type="project" value="FlyBase"/>
</dbReference>
<dbReference type="GO" id="GO:0003677">
    <property type="term" value="F:DNA binding"/>
    <property type="evidence" value="ECO:0000314"/>
    <property type="project" value="UniProtKB"/>
</dbReference>
<dbReference type="GO" id="GO:0001228">
    <property type="term" value="F:DNA-binding transcription activator activity, RNA polymerase II-specific"/>
    <property type="evidence" value="ECO:0000314"/>
    <property type="project" value="FlyBase"/>
</dbReference>
<dbReference type="GO" id="GO:0000981">
    <property type="term" value="F:DNA-binding transcription factor activity, RNA polymerase II-specific"/>
    <property type="evidence" value="ECO:0000315"/>
    <property type="project" value="FlyBase"/>
</dbReference>
<dbReference type="GO" id="GO:0035035">
    <property type="term" value="F:histone acetyltransferase binding"/>
    <property type="evidence" value="ECO:0000353"/>
    <property type="project" value="FlyBase"/>
</dbReference>
<dbReference type="GO" id="GO:0000978">
    <property type="term" value="F:RNA polymerase II cis-regulatory region sequence-specific DNA binding"/>
    <property type="evidence" value="ECO:0000314"/>
    <property type="project" value="FlyBase"/>
</dbReference>
<dbReference type="GO" id="GO:0000977">
    <property type="term" value="F:RNA polymerase II transcription regulatory region sequence-specific DNA binding"/>
    <property type="evidence" value="ECO:0000314"/>
    <property type="project" value="FlyBase"/>
</dbReference>
<dbReference type="GO" id="GO:0061629">
    <property type="term" value="F:RNA polymerase II-specific DNA-binding transcription factor binding"/>
    <property type="evidence" value="ECO:0000353"/>
    <property type="project" value="FlyBase"/>
</dbReference>
<dbReference type="GO" id="GO:0008356">
    <property type="term" value="P:asymmetric cell division"/>
    <property type="evidence" value="ECO:0000304"/>
    <property type="project" value="FlyBase"/>
</dbReference>
<dbReference type="GO" id="GO:0001709">
    <property type="term" value="P:cell fate determination"/>
    <property type="evidence" value="ECO:0000304"/>
    <property type="project" value="FlyBase"/>
</dbReference>
<dbReference type="GO" id="GO:0042688">
    <property type="term" value="P:crystal cell differentiation"/>
    <property type="evidence" value="ECO:0000315"/>
    <property type="project" value="FlyBase"/>
</dbReference>
<dbReference type="GO" id="GO:0030097">
    <property type="term" value="P:hemopoiesis"/>
    <property type="evidence" value="ECO:0000304"/>
    <property type="project" value="FlyBase"/>
</dbReference>
<dbReference type="GO" id="GO:0007480">
    <property type="term" value="P:imaginal disc-derived leg morphogenesis"/>
    <property type="evidence" value="ECO:0000315"/>
    <property type="project" value="FlyBase"/>
</dbReference>
<dbReference type="GO" id="GO:0008586">
    <property type="term" value="P:imaginal disc-derived wing vein morphogenesis"/>
    <property type="evidence" value="ECO:0000315"/>
    <property type="project" value="FlyBase"/>
</dbReference>
<dbReference type="GO" id="GO:0007616">
    <property type="term" value="P:long-term memory"/>
    <property type="evidence" value="ECO:0000315"/>
    <property type="project" value="FlyBase"/>
</dbReference>
<dbReference type="GO" id="GO:0042683">
    <property type="term" value="P:negative regulation of compound eye cone cell fate specification"/>
    <property type="evidence" value="ECO:0000304"/>
    <property type="project" value="FlyBase"/>
</dbReference>
<dbReference type="GO" id="GO:0045892">
    <property type="term" value="P:negative regulation of DNA-templated transcription"/>
    <property type="evidence" value="ECO:0000304"/>
    <property type="project" value="FlyBase"/>
</dbReference>
<dbReference type="GO" id="GO:0045746">
    <property type="term" value="P:negative regulation of Notch signaling pathway"/>
    <property type="evidence" value="ECO:0000316"/>
    <property type="project" value="FlyBase"/>
</dbReference>
<dbReference type="GO" id="GO:0000122">
    <property type="term" value="P:negative regulation of transcription by RNA polymerase II"/>
    <property type="evidence" value="ECO:0000315"/>
    <property type="project" value="FlyBase"/>
</dbReference>
<dbReference type="GO" id="GO:0007219">
    <property type="term" value="P:Notch signaling pathway"/>
    <property type="evidence" value="ECO:0000314"/>
    <property type="project" value="FlyBase"/>
</dbReference>
<dbReference type="GO" id="GO:1900087">
    <property type="term" value="P:positive regulation of G1/S transition of mitotic cell cycle"/>
    <property type="evidence" value="ECO:0000315"/>
    <property type="project" value="FlyBase"/>
</dbReference>
<dbReference type="GO" id="GO:0045944">
    <property type="term" value="P:positive regulation of transcription by RNA polymerase II"/>
    <property type="evidence" value="ECO:0000314"/>
    <property type="project" value="FlyBase"/>
</dbReference>
<dbReference type="GO" id="GO:0016360">
    <property type="term" value="P:sensory organ precursor cell fate determination"/>
    <property type="evidence" value="ECO:0000315"/>
    <property type="project" value="UniProtKB"/>
</dbReference>
<dbReference type="GO" id="GO:0048190">
    <property type="term" value="P:wing disc dorsal/ventral pattern formation"/>
    <property type="evidence" value="ECO:0000315"/>
    <property type="project" value="FlyBase"/>
</dbReference>
<dbReference type="CDD" id="cd01176">
    <property type="entry name" value="IPT_RBP-Jkappa"/>
    <property type="match status" value="1"/>
</dbReference>
<dbReference type="FunFam" id="2.60.40.1450:FF:000001">
    <property type="entry name" value="Recombining binding protein suppressor of hairless"/>
    <property type="match status" value="1"/>
</dbReference>
<dbReference type="FunFam" id="2.80.10.50:FF:000003">
    <property type="entry name" value="recombining binding protein suppressor of hairless"/>
    <property type="match status" value="1"/>
</dbReference>
<dbReference type="FunFam" id="2.60.40.10:FF:000074">
    <property type="entry name" value="Recombining binding protein suppressor of hairless, putative"/>
    <property type="match status" value="1"/>
</dbReference>
<dbReference type="Gene3D" id="2.80.10.50">
    <property type="match status" value="1"/>
</dbReference>
<dbReference type="Gene3D" id="2.60.40.10">
    <property type="entry name" value="Immunoglobulins"/>
    <property type="match status" value="1"/>
</dbReference>
<dbReference type="Gene3D" id="2.60.40.1450">
    <property type="entry name" value="LAG1, DNA binding domain"/>
    <property type="match status" value="1"/>
</dbReference>
<dbReference type="InterPro" id="IPR015350">
    <property type="entry name" value="Beta-trefoil_DNA-bd_dom"/>
</dbReference>
<dbReference type="InterPro" id="IPR036358">
    <property type="entry name" value="BTD_sf"/>
</dbReference>
<dbReference type="InterPro" id="IPR040159">
    <property type="entry name" value="CLS_fam"/>
</dbReference>
<dbReference type="InterPro" id="IPR013783">
    <property type="entry name" value="Ig-like_fold"/>
</dbReference>
<dbReference type="InterPro" id="IPR014756">
    <property type="entry name" value="Ig_E-set"/>
</dbReference>
<dbReference type="InterPro" id="IPR008967">
    <property type="entry name" value="p53-like_TF_DNA-bd_sf"/>
</dbReference>
<dbReference type="InterPro" id="IPR015351">
    <property type="entry name" value="RBP-J/Cbf11/Cbf12_DNA-bd"/>
</dbReference>
<dbReference type="InterPro" id="IPR037095">
    <property type="entry name" value="RBP-J/Cbf11_DNA-bd_sf"/>
</dbReference>
<dbReference type="InterPro" id="IPR038007">
    <property type="entry name" value="RBP-Jkappa_IPT"/>
</dbReference>
<dbReference type="PANTHER" id="PTHR10665">
    <property type="entry name" value="RECOMBINING BINDING PROTEIN SUPPRESSOR OF HAIRLESS"/>
    <property type="match status" value="1"/>
</dbReference>
<dbReference type="Pfam" id="PF09270">
    <property type="entry name" value="BTD"/>
    <property type="match status" value="1"/>
</dbReference>
<dbReference type="Pfam" id="PF09271">
    <property type="entry name" value="LAG1-DNAbind"/>
    <property type="match status" value="1"/>
</dbReference>
<dbReference type="Pfam" id="PF20144">
    <property type="entry name" value="TIG_SUH"/>
    <property type="match status" value="1"/>
</dbReference>
<dbReference type="SMART" id="SM01268">
    <property type="entry name" value="BTD"/>
    <property type="match status" value="1"/>
</dbReference>
<dbReference type="SMART" id="SM01267">
    <property type="entry name" value="LAG1_DNAbind"/>
    <property type="match status" value="1"/>
</dbReference>
<dbReference type="SUPFAM" id="SSF110217">
    <property type="entry name" value="DNA-binding protein LAG-1 (CSL)"/>
    <property type="match status" value="1"/>
</dbReference>
<dbReference type="SUPFAM" id="SSF81296">
    <property type="entry name" value="E set domains"/>
    <property type="match status" value="1"/>
</dbReference>
<dbReference type="SUPFAM" id="SSF49417">
    <property type="entry name" value="p53-like transcription factors"/>
    <property type="match status" value="1"/>
</dbReference>
<comment type="function">
    <text evidence="3 4 5 6 7 8 10 12">Transcriptional regulator that plays a central role in Notch signaling, a signaling pathway involved in cell-cell communication that regulates a broad spectrum of cell-fate determinations (PubMed:10673509, PubMed:1617729, PubMed:21262215, PubMed:8674407). Binds directly the 5'-GTGRGAR-3' DNA consensus sequence, which is present in the regulatory region of several genes (PubMed:10673509). Acts as a transcriptional repressor when it is not associated with Notch proteins (PubMed:10673509). When associated with some Notch protein, it acts as a transcriptional activator that activates transcription of Notch target genes (PubMed:10673509). Required for transcription of Sim (PubMed:10673509). Specifically binds to the immunoglobulin kappa-type J segment recombination signal sequence (PubMed:1617729, PubMed:1617730, PubMed:1744127). Required for neurogenesis in imaginal disks (PubMed:1617730, PubMed:7813798). In the larval brain, might play a role as a transducer of Notch signaling during type II neuroblast development (PubMed:21262215). Also functions independently of the Notch pathway, in the development of the bristle sensory organ precursor cell (PubMed:12642500).</text>
</comment>
<comment type="subunit">
    <text evidence="9 11">Interacts with activated cleaved Notch. Interacts with Hairless, this interaction preventing its DNA-binding activity. Interacts with insv (via BEN domain).</text>
</comment>
<comment type="interaction">
    <interactant intactId="EBI-92180">
        <id>P28159</id>
    </interactant>
    <interactant intactId="EBI-192407">
        <id>Q8SYK5</id>
        <label>insv</label>
    </interactant>
    <organismsDiffer>false</organismsDiffer>
    <experiments>4</experiments>
</comment>
<comment type="interaction">
    <interactant intactId="EBI-92180">
        <id>P28159</id>
    </interactant>
    <interactant intactId="EBI-103438">
        <id>P07207</id>
        <label>N</label>
    </interactant>
    <organismsDiffer>false</organismsDiffer>
    <experiments>7</experiments>
</comment>
<comment type="interaction">
    <interactant intactId="EBI-92180">
        <id>P28159</id>
    </interactant>
    <interactant intactId="EBI-1392707">
        <id>Q01705</id>
        <label>Notch1</label>
    </interactant>
    <organismsDiffer>true</organismsDiffer>
    <experiments>3</experiments>
</comment>
<comment type="interaction">
    <interactant intactId="EBI-92180">
        <id>P28159</id>
    </interactant>
    <interactant intactId="EBI-355371">
        <id>P20226</id>
        <label>TBP</label>
    </interactant>
    <organismsDiffer>true</organismsDiffer>
    <experiments>2</experiments>
</comment>
<comment type="subcellular location">
    <subcellularLocation>
        <location evidence="12">Nucleus</location>
    </subcellularLocation>
    <subcellularLocation>
        <location evidence="12">Cytoplasm</location>
    </subcellularLocation>
    <text evidence="12">In imaginal disk, at the onset of differentiation of socket cell, it is also present in the cytoplasm.</text>
</comment>
<comment type="developmental stage">
    <text evidence="5 6">Expressed in early syncytial embryo (PubMed:1617729, PubMed:1617730). During cellularization, transient accumulation in a striped pattern (PubMed:1617729, PubMed:1617730). From late stage 11 onward, expressed gradually in a small number of segmentally reiterated cells of the peripheral nervous system (PNS) (PubMed:1617729, PubMed:1617730). This expression is specific to the external sensory organs (PubMed:1617730). In the thoracic and abdominal segments, expressed in the trichogen and tormogen cells, two outer accessory cells present in all larval external sensory organs (PubMed:1617730). During the late third larval instar, expressed in many larval and imaginal tissues (PubMed:1617730). Broadly distributed in the disks, but most abundant in the posterior region of the wing pouch (PubMed:1617730). In the leg disk, predominant in a zone largely overlapping the posterior region (PubMed:1617730). In the eye-antenna disk, low level in both the retinal field posterior to the morphogenetic furrow and the central antenna region, while higher levels appears on the margins of the disk and in the vicinity of the morphogenetic furrow (PubMed:1617730). In pupae, expressed in many tissues at this stage, including developing muscle and epidermis (PubMed:1617730). In both microchaetes and macrochaetes of 24 hr pupae, expressed on the notum and the head (PubMed:1617730). Expressed in the tormogen cell and in specific bristle cells (PubMed:1617730).</text>
</comment>
<comment type="disruption phenotype">
    <text evidence="6 8">Lethal during the first day of pupal development (PubMed:1617730). At the larval stage, results in a 'neurogenic' phenotype in imaginal disks, in which too many cells adopt the sensory organ precursor cell fate (PubMed:1617730). RNAi-mediated knockdown in type II neuroblasts, results in smaller cells (PubMed:1617730).</text>
</comment>
<comment type="similarity">
    <text evidence="13">Belongs to the Su(H) family.</text>
</comment>
<comment type="caution">
    <text evidence="13">Despite some similarity with the 'phage' integrase family, PubMed:7958912 showed that it has no recombinase activity.</text>
</comment>
<comment type="sequence caution" evidence="13">
    <conflict type="frameshift">
        <sequence resource="EMBL-CDS" id="AAA06211"/>
    </conflict>
</comment>
<comment type="sequence caution" evidence="13">
    <conflict type="erroneous initiation">
        <sequence resource="EMBL-CDS" id="CAA41282"/>
    </conflict>
    <text>Truncated N-terminus.</text>
</comment>
<proteinExistence type="evidence at protein level"/>
<gene>
    <name type="primary">Su(H)</name>
    <name type="synonym">dRBP-JK</name>
    <name type="ORF">CG3497</name>
</gene>
<organism>
    <name type="scientific">Drosophila melanogaster</name>
    <name type="common">Fruit fly</name>
    <dbReference type="NCBI Taxonomy" id="7227"/>
    <lineage>
        <taxon>Eukaryota</taxon>
        <taxon>Metazoa</taxon>
        <taxon>Ecdysozoa</taxon>
        <taxon>Arthropoda</taxon>
        <taxon>Hexapoda</taxon>
        <taxon>Insecta</taxon>
        <taxon>Pterygota</taxon>
        <taxon>Neoptera</taxon>
        <taxon>Endopterygota</taxon>
        <taxon>Diptera</taxon>
        <taxon>Brachycera</taxon>
        <taxon>Muscomorpha</taxon>
        <taxon>Ephydroidea</taxon>
        <taxon>Drosophilidae</taxon>
        <taxon>Drosophila</taxon>
        <taxon>Sophophora</taxon>
    </lineage>
</organism>
<name>SUH_DROME</name>
<protein>
    <recommendedName>
        <fullName>Suppressor of hairless protein</fullName>
    </recommendedName>
    <alternativeName>
        <fullName>J kappa-recombination signal-binding protein</fullName>
    </alternativeName>
    <alternativeName>
        <fullName>RBP-J kappa</fullName>
    </alternativeName>
</protein>
<keyword id="KW-0002">3D-structure</keyword>
<keyword id="KW-0010">Activator</keyword>
<keyword id="KW-0963">Cytoplasm</keyword>
<keyword id="KW-0217">Developmental protein</keyword>
<keyword id="KW-0238">DNA-binding</keyword>
<keyword id="KW-0914">Notch signaling pathway</keyword>
<keyword id="KW-0539">Nucleus</keyword>
<keyword id="KW-1185">Reference proteome</keyword>
<keyword id="KW-0677">Repeat</keyword>
<keyword id="KW-0678">Repressor</keyword>
<keyword id="KW-0804">Transcription</keyword>
<keyword id="KW-0805">Transcription regulation</keyword>
<feature type="chain" id="PRO_0000208572" description="Suppressor of hairless protein">
    <location>
        <begin position="1"/>
        <end position="594"/>
    </location>
</feature>
<feature type="domain" description="IPT/TIG">
    <location>
        <begin position="429"/>
        <end position="519"/>
    </location>
</feature>
<feature type="region of interest" description="Disordered" evidence="2">
    <location>
        <begin position="20"/>
        <end position="87"/>
    </location>
</feature>
<feature type="region of interest" description="DNA-binding" evidence="1">
    <location>
        <begin position="131"/>
        <end position="141"/>
    </location>
</feature>
<feature type="region of interest" description="DNA-binding" evidence="1">
    <location>
        <begin position="239"/>
        <end position="244"/>
    </location>
</feature>
<feature type="region of interest" description="DNA-binding" evidence="1">
    <location>
        <begin position="266"/>
        <end position="271"/>
    </location>
</feature>
<feature type="region of interest" description="Disordered" evidence="2">
    <location>
        <begin position="542"/>
        <end position="594"/>
    </location>
</feature>
<feature type="compositionally biased region" description="Low complexity" evidence="2">
    <location>
        <begin position="58"/>
        <end position="87"/>
    </location>
</feature>
<feature type="compositionally biased region" description="Low complexity" evidence="2">
    <location>
        <begin position="542"/>
        <end position="562"/>
    </location>
</feature>
<feature type="compositionally biased region" description="Low complexity" evidence="2">
    <location>
        <begin position="569"/>
        <end position="580"/>
    </location>
</feature>
<feature type="compositionally biased region" description="Polar residues" evidence="2">
    <location>
        <begin position="582"/>
        <end position="594"/>
    </location>
</feature>
<feature type="sequence variant" description="In strain: LAMTO 3, LAMTO 4, LAMTO 12, LAMTO 18, LAMTO 19, LAMTO 21, LAMTO 31, LAMTO 35, LAMTO 101 and LAMTO 111.">
    <location>
        <begin position="80"/>
        <end position="82"/>
    </location>
</feature>
<feature type="sequence variant" description="In strain: LAMTO 13, LAMTO 37 and LAMTO 134.">
    <location>
        <begin position="81"/>
        <end position="82"/>
    </location>
</feature>
<feature type="sequence variant" description="In strain: LAMTO 124.">
    <location>
        <position position="82"/>
    </location>
</feature>
<feature type="mutagenesis site" description="No effect." evidence="10">
    <original>Y</original>
    <variation>F</variation>
    <location>
        <position position="315"/>
    </location>
</feature>
<feature type="sequence conflict" description="In Ref. 1; AAA06211/CAA41282." evidence="13" ref="1">
    <original>ER</original>
    <variation>DG</variation>
    <location>
        <begin position="116"/>
        <end position="117"/>
    </location>
</feature>
<feature type="sequence conflict" description="In Ref. 1; AAA06211/CAA41282." evidence="13" ref="1">
    <original>V</original>
    <variation>A</variation>
    <location>
        <position position="492"/>
    </location>
</feature>
<feature type="helix" evidence="14">
    <location>
        <begin position="107"/>
        <end position="116"/>
    </location>
</feature>
<feature type="strand" evidence="14">
    <location>
        <begin position="120"/>
        <end position="131"/>
    </location>
</feature>
<feature type="strand" evidence="14">
    <location>
        <begin position="146"/>
        <end position="151"/>
    </location>
</feature>
<feature type="helix" evidence="14">
    <location>
        <begin position="153"/>
        <end position="163"/>
    </location>
</feature>
<feature type="helix" evidence="14">
    <location>
        <begin position="167"/>
        <end position="171"/>
    </location>
</feature>
<feature type="strand" evidence="14">
    <location>
        <begin position="172"/>
        <end position="178"/>
    </location>
</feature>
<feature type="strand" evidence="14">
    <location>
        <begin position="187"/>
        <end position="189"/>
    </location>
</feature>
<feature type="strand" evidence="14">
    <location>
        <begin position="195"/>
        <end position="198"/>
    </location>
</feature>
<feature type="strand" evidence="14">
    <location>
        <begin position="211"/>
        <end position="213"/>
    </location>
</feature>
<feature type="strand" evidence="14">
    <location>
        <begin position="216"/>
        <end position="221"/>
    </location>
</feature>
<feature type="strand" evidence="14">
    <location>
        <begin position="226"/>
        <end position="231"/>
    </location>
</feature>
<feature type="strand" evidence="14">
    <location>
        <begin position="235"/>
        <end position="238"/>
    </location>
</feature>
<feature type="helix" evidence="14">
    <location>
        <begin position="248"/>
        <end position="250"/>
    </location>
</feature>
<feature type="strand" evidence="14">
    <location>
        <begin position="259"/>
        <end position="266"/>
    </location>
</feature>
<feature type="strand" evidence="14">
    <location>
        <begin position="274"/>
        <end position="280"/>
    </location>
</feature>
<feature type="strand" evidence="14">
    <location>
        <begin position="283"/>
        <end position="289"/>
    </location>
</feature>
<feature type="strand" evidence="14">
    <location>
        <begin position="294"/>
        <end position="299"/>
    </location>
</feature>
<feature type="strand" evidence="14">
    <location>
        <begin position="321"/>
        <end position="326"/>
    </location>
</feature>
<feature type="turn" evidence="14">
    <location>
        <begin position="327"/>
        <end position="329"/>
    </location>
</feature>
<feature type="strand" evidence="14">
    <location>
        <begin position="336"/>
        <end position="342"/>
    </location>
</feature>
<feature type="strand" evidence="14">
    <location>
        <begin position="345"/>
        <end position="347"/>
    </location>
</feature>
<feature type="strand" evidence="14">
    <location>
        <begin position="359"/>
        <end position="364"/>
    </location>
</feature>
<feature type="strand" evidence="14">
    <location>
        <begin position="367"/>
        <end position="375"/>
    </location>
</feature>
<feature type="strand" evidence="14">
    <location>
        <begin position="378"/>
        <end position="383"/>
    </location>
</feature>
<feature type="strand" evidence="14">
    <location>
        <begin position="388"/>
        <end position="395"/>
    </location>
</feature>
<feature type="helix" evidence="14">
    <location>
        <begin position="398"/>
        <end position="400"/>
    </location>
</feature>
<feature type="strand" evidence="14">
    <location>
        <begin position="402"/>
        <end position="416"/>
    </location>
</feature>
<feature type="strand" evidence="14">
    <location>
        <begin position="430"/>
        <end position="437"/>
    </location>
</feature>
<feature type="strand" evidence="14">
    <location>
        <begin position="439"/>
        <end position="442"/>
    </location>
</feature>
<feature type="strand" evidence="14">
    <location>
        <begin position="444"/>
        <end position="450"/>
    </location>
</feature>
<feature type="strand" evidence="14">
    <location>
        <begin position="456"/>
        <end position="460"/>
    </location>
</feature>
<feature type="strand" evidence="14">
    <location>
        <begin position="467"/>
        <end position="471"/>
    </location>
</feature>
<feature type="strand" evidence="14">
    <location>
        <begin position="474"/>
        <end position="477"/>
    </location>
</feature>
<feature type="helix" evidence="14">
    <location>
        <begin position="483"/>
        <end position="488"/>
    </location>
</feature>
<feature type="turn" evidence="14">
    <location>
        <begin position="489"/>
        <end position="491"/>
    </location>
</feature>
<feature type="strand" evidence="14">
    <location>
        <begin position="492"/>
        <end position="494"/>
    </location>
</feature>
<feature type="strand" evidence="14">
    <location>
        <begin position="498"/>
        <end position="504"/>
    </location>
</feature>
<feature type="strand" evidence="14">
    <location>
        <begin position="507"/>
        <end position="520"/>
    </location>
</feature>
<accession>P28159</accession>
<accession>Q3S1M8</accession>
<accession>Q9TVK8</accession>
<accession>Q9TVY7</accession>
<accession>Q9TW34</accession>
<accession>Q9U8F9</accession>
<accession>Q9V446</accession>